<organism>
    <name type="scientific">Gamma-proteobacterium Hot 75m4</name>
    <dbReference type="NCBI Taxonomy" id="245185"/>
    <lineage>
        <taxon>Bacteria</taxon>
        <taxon>Pseudomonadati</taxon>
        <taxon>Pseudomonadota</taxon>
        <taxon>Gammaproteobacteria</taxon>
    </lineage>
</organism>
<sequence>MGKLLLILGSAIALPSFAAAGGDLDISDTVGVSFWLVTAGMLAATVFFFVERDQVSAKWKTSLTVSGLITGIAFWHYLYMRGVWIDTGDTPTVFRYIDWLLTVPLQVVEFYLILAACTSVAASLFKKLLAGSLVMLGAGFAGEAGLAPVLPAFIIGMAGWLYMIYELYMGEGKAAVSTASPAVNSAYNAMMMIIVVGWAIYPAGYAAGYLMGGEGVYASNLNLIYNLADFVNKILFGLIIWNVAVKESSNA</sequence>
<evidence type="ECO:0000250" key="1"/>
<evidence type="ECO:0000255" key="2"/>
<evidence type="ECO:0000269" key="3">
    <source>
    </source>
</evidence>
<evidence type="ECO:0000269" key="4">
    <source>
    </source>
</evidence>
<evidence type="ECO:0000305" key="5"/>
<evidence type="ECO:0007829" key="6">
    <source>
        <dbReference type="PDB" id="4KLY"/>
    </source>
</evidence>
<evidence type="ECO:0007829" key="7">
    <source>
        <dbReference type="PDB" id="4KNF"/>
    </source>
</evidence>
<feature type="signal peptide" evidence="2">
    <location>
        <begin position="1"/>
        <end position="18"/>
    </location>
</feature>
<feature type="chain" id="PRO_0000020257" description="Blue-light absorbing proteorhodopsin">
    <location>
        <begin position="19"/>
        <end position="251"/>
    </location>
</feature>
<feature type="transmembrane region" description="Helical" evidence="2">
    <location>
        <begin position="30"/>
        <end position="50"/>
    </location>
</feature>
<feature type="transmembrane region" description="Helical" evidence="2">
    <location>
        <begin position="65"/>
        <end position="85"/>
    </location>
</feature>
<feature type="transmembrane region" description="Helical" evidence="2">
    <location>
        <begin position="97"/>
        <end position="117"/>
    </location>
</feature>
<feature type="transmembrane region" description="Helical" evidence="2">
    <location>
        <begin position="120"/>
        <end position="140"/>
    </location>
</feature>
<feature type="transmembrane region" description="Helical" evidence="2">
    <location>
        <begin position="144"/>
        <end position="164"/>
    </location>
</feature>
<feature type="transmembrane region" description="Helical" evidence="2">
    <location>
        <begin position="190"/>
        <end position="210"/>
    </location>
</feature>
<feature type="transmembrane region" description="Helical" evidence="2">
    <location>
        <begin position="223"/>
        <end position="243"/>
    </location>
</feature>
<feature type="site" description="Primary proton acceptor">
    <location>
        <position position="98"/>
    </location>
</feature>
<feature type="site" description="Responsible for spectral tuning">
    <location>
        <position position="106"/>
    </location>
</feature>
<feature type="site" description="Primary proton donor">
    <location>
        <position position="109"/>
    </location>
</feature>
<feature type="modified residue" description="N6-(retinylidene)lysine" evidence="1">
    <location>
        <position position="233"/>
    </location>
</feature>
<feature type="mutagenesis site" description="No effect." evidence="3">
    <original>I</original>
    <variation>V</variation>
    <location>
        <position position="69"/>
    </location>
</feature>
<feature type="mutagenesis site" description="Changes in the pH-induced shift." evidence="4">
    <original>D</original>
    <variation>N</variation>
    <location>
        <position position="98"/>
    </location>
</feature>
<feature type="mutagenesis site" description="Absorbs green light; faster photocycle." evidence="3">
    <original>Q</original>
    <variation>L</variation>
    <location>
        <position position="106"/>
    </location>
</feature>
<feature type="mutagenesis site" description="Changes in the photocycle." evidence="4">
    <original>E</original>
    <variation>Q</variation>
    <location>
        <position position="109"/>
    </location>
</feature>
<feature type="helix" evidence="7">
    <location>
        <begin position="29"/>
        <end position="50"/>
    </location>
</feature>
<feature type="helix" evidence="7">
    <location>
        <begin position="51"/>
        <end position="54"/>
    </location>
</feature>
<feature type="turn" evidence="7">
    <location>
        <begin position="57"/>
        <end position="59"/>
    </location>
</feature>
<feature type="helix" evidence="7">
    <location>
        <begin position="60"/>
        <end position="87"/>
    </location>
</feature>
<feature type="helix" evidence="7">
    <location>
        <begin position="92"/>
        <end position="115"/>
    </location>
</feature>
<feature type="strand" evidence="6">
    <location>
        <begin position="117"/>
        <end position="119"/>
    </location>
</feature>
<feature type="helix" evidence="7">
    <location>
        <begin position="121"/>
        <end position="143"/>
    </location>
</feature>
<feature type="helix" evidence="7">
    <location>
        <begin position="149"/>
        <end position="168"/>
    </location>
</feature>
<feature type="helix" evidence="7">
    <location>
        <begin position="171"/>
        <end position="173"/>
    </location>
</feature>
<feature type="helix" evidence="6">
    <location>
        <begin position="174"/>
        <end position="177"/>
    </location>
</feature>
<feature type="helix" evidence="7">
    <location>
        <begin position="181"/>
        <end position="195"/>
    </location>
</feature>
<feature type="turn" evidence="7">
    <location>
        <begin position="196"/>
        <end position="199"/>
    </location>
</feature>
<feature type="helix" evidence="7">
    <location>
        <begin position="200"/>
        <end position="209"/>
    </location>
</feature>
<feature type="helix" evidence="7">
    <location>
        <begin position="218"/>
        <end position="232"/>
    </location>
</feature>
<feature type="helix" evidence="7">
    <location>
        <begin position="234"/>
        <end position="251"/>
    </location>
</feature>
<dbReference type="EMBL" id="AF349981">
    <property type="protein sequence ID" value="AAK30179.1"/>
    <property type="molecule type" value="Genomic_DNA"/>
</dbReference>
<dbReference type="PDB" id="4KLY">
    <property type="method" value="X-ray"/>
    <property type="resolution" value="2.70 A"/>
    <property type="chains" value="A/B/C/D/E=1-251"/>
</dbReference>
<dbReference type="PDB" id="4KNF">
    <property type="method" value="X-ray"/>
    <property type="resolution" value="2.60 A"/>
    <property type="chains" value="A/B/C/D/E=1-251"/>
</dbReference>
<dbReference type="PDBsum" id="4KLY"/>
<dbReference type="PDBsum" id="4KNF"/>
<dbReference type="SMR" id="Q9AFF7"/>
<dbReference type="TCDB" id="3.E.1.6.12">
    <property type="family name" value="the ion-translocating microbial rhodopsin (mr) family"/>
</dbReference>
<dbReference type="EvolutionaryTrace" id="Q9AFF7"/>
<dbReference type="GO" id="GO:0005886">
    <property type="term" value="C:plasma membrane"/>
    <property type="evidence" value="ECO:0007669"/>
    <property type="project" value="UniProtKB-SubCell"/>
</dbReference>
<dbReference type="GO" id="GO:0010461">
    <property type="term" value="F:light-activated monoatomic ion channel activity"/>
    <property type="evidence" value="ECO:0007669"/>
    <property type="project" value="InterPro"/>
</dbReference>
<dbReference type="GO" id="GO:0009881">
    <property type="term" value="F:photoreceptor activity"/>
    <property type="evidence" value="ECO:0007669"/>
    <property type="project" value="UniProtKB-KW"/>
</dbReference>
<dbReference type="GO" id="GO:0007602">
    <property type="term" value="P:phototransduction"/>
    <property type="evidence" value="ECO:0007669"/>
    <property type="project" value="UniProtKB-KW"/>
</dbReference>
<dbReference type="GO" id="GO:1902600">
    <property type="term" value="P:proton transmembrane transport"/>
    <property type="evidence" value="ECO:0007669"/>
    <property type="project" value="UniProtKB-KW"/>
</dbReference>
<dbReference type="CDD" id="cd15242">
    <property type="entry name" value="7tm_Proteorhodopsin"/>
    <property type="match status" value="1"/>
</dbReference>
<dbReference type="Gene3D" id="1.20.1070.10">
    <property type="entry name" value="Rhodopsin 7-helix transmembrane proteins"/>
    <property type="match status" value="1"/>
</dbReference>
<dbReference type="InterPro" id="IPR001425">
    <property type="entry name" value="Arc/bac/fun_rhodopsins"/>
</dbReference>
<dbReference type="InterPro" id="IPR017402">
    <property type="entry name" value="Proteorhodopsin"/>
</dbReference>
<dbReference type="InterPro" id="IPR018229">
    <property type="entry name" value="Rhodopsin_retinal_BS"/>
</dbReference>
<dbReference type="PANTHER" id="PTHR28286">
    <property type="match status" value="1"/>
</dbReference>
<dbReference type="PANTHER" id="PTHR28286:SF2">
    <property type="entry name" value="BACTERIORHODOPSIN _OPSIN, NOPA (EUROFUNG)"/>
    <property type="match status" value="1"/>
</dbReference>
<dbReference type="Pfam" id="PF01036">
    <property type="entry name" value="Bac_rhodopsin"/>
    <property type="match status" value="1"/>
</dbReference>
<dbReference type="PIRSF" id="PIRSF038142">
    <property type="entry name" value="Rhodopsin_bac_prd"/>
    <property type="match status" value="1"/>
</dbReference>
<dbReference type="PRINTS" id="PR00251">
    <property type="entry name" value="BACTRLOPSIN"/>
</dbReference>
<dbReference type="SMART" id="SM01021">
    <property type="entry name" value="Bac_rhodopsin"/>
    <property type="match status" value="1"/>
</dbReference>
<dbReference type="SUPFAM" id="SSF81321">
    <property type="entry name" value="Family A G protein-coupled receptor-like"/>
    <property type="match status" value="1"/>
</dbReference>
<dbReference type="PROSITE" id="PS00950">
    <property type="entry name" value="BACTERIAL_OPSIN_1"/>
    <property type="match status" value="1"/>
</dbReference>
<accession>Q9AFF7</accession>
<name>PRRB_PRB02</name>
<keyword id="KW-0002">3D-structure</keyword>
<keyword id="KW-1003">Cell membrane</keyword>
<keyword id="KW-0157">Chromophore</keyword>
<keyword id="KW-0375">Hydrogen ion transport</keyword>
<keyword id="KW-0406">Ion transport</keyword>
<keyword id="KW-0472">Membrane</keyword>
<keyword id="KW-0600">Photoreceptor protein</keyword>
<keyword id="KW-0675">Receptor</keyword>
<keyword id="KW-0681">Retinal protein</keyword>
<keyword id="KW-0716">Sensory transduction</keyword>
<keyword id="KW-0732">Signal</keyword>
<keyword id="KW-0812">Transmembrane</keyword>
<keyword id="KW-1133">Transmembrane helix</keyword>
<keyword id="KW-0813">Transport</keyword>
<proteinExistence type="evidence at protein level"/>
<comment type="function">
    <text>Light-driven proton pump. May have a regulatory rather than energy harvesting function, based on light-induced opening of proton channels, to modulate cell physiology depending on light intensity variations. Could be, therefore, a sensory rhodopsin, potentially associated with a transducer component.</text>
</comment>
<comment type="subcellular location">
    <subcellularLocation>
        <location evidence="5">Cell membrane</location>
        <topology evidence="5">Multi-pass membrane protein</topology>
    </subcellularLocation>
</comment>
<comment type="PTM">
    <text evidence="1">Contains one covalently linked retinal chromophore.</text>
</comment>
<comment type="miscellaneous">
    <text>Presents a much slower photocycle than that of the green-absorbing proteorhodopsin, probably an adaptation to the intensity of solar illumination at a depth of 75m, where this bacterium was collected. Transport occurs only at pHs above 7 and is unidirectional.</text>
</comment>
<comment type="similarity">
    <text evidence="5">Belongs to the archaeal/bacterial/fungal opsin family.</text>
</comment>
<reference key="1">
    <citation type="journal article" date="2001" name="Nature">
        <title>Proteorhodopsin phototrophy in the ocean.</title>
        <authorList>
            <person name="Beja O."/>
            <person name="Spudich E.N."/>
            <person name="Spudich J.L."/>
            <person name="Leclerc M."/>
            <person name="DeLong E.F."/>
        </authorList>
    </citation>
    <scope>NUCLEOTIDE SEQUENCE [GENOMIC DNA]</scope>
</reference>
<reference key="2">
    <citation type="journal article" date="2003" name="EMBO J.">
        <title>Diversification and spectral tuning in marine proteorhodopsins.</title>
        <authorList>
            <person name="Man D."/>
            <person name="Wang W."/>
            <person name="Sabehi G."/>
            <person name="Aravind L."/>
            <person name="Post A.F."/>
            <person name="Massana R."/>
            <person name="Spudich E.N."/>
            <person name="Spudich J.L."/>
            <person name="Beja O."/>
        </authorList>
    </citation>
    <scope>ENVIRONMENTAL DISTRIBUTION</scope>
    <scope>MUTAGENESIS OF ILE-69 AND GLN-106</scope>
</reference>
<reference key="3">
    <citation type="journal article" date="2003" name="J. Biol. Chem.">
        <title>Spectroscopic and photochemical characterization of a deep ocean proteorhodopsin.</title>
        <authorList>
            <person name="Wang W.W."/>
            <person name="Sineshchekov O.A."/>
            <person name="Spudich E.N."/>
            <person name="Spudich J.L."/>
        </authorList>
    </citation>
    <scope>COMPARISON WITH PHOTOCHEMICAL CYCLE OF GREEN PROTEORHODOPSIN</scope>
    <scope>MUTAGENESIS OF ASP-98 AND GLU-109</scope>
</reference>
<protein>
    <recommendedName>
        <fullName>Blue-light absorbing proteorhodopsin</fullName>
        <shortName>BPR</shortName>
    </recommendedName>
</protein>